<keyword id="KW-0413">Isomerase</keyword>
<keyword id="KW-0460">Magnesium</keyword>
<keyword id="KW-0479">Metal-binding</keyword>
<keyword id="KW-0597">Phosphoprotein</keyword>
<comment type="function">
    <text evidence="1">Catalyzes the conversion of glucosamine-6-phosphate to glucosamine-1-phosphate.</text>
</comment>
<comment type="catalytic activity">
    <reaction evidence="1">
        <text>alpha-D-glucosamine 1-phosphate = D-glucosamine 6-phosphate</text>
        <dbReference type="Rhea" id="RHEA:23424"/>
        <dbReference type="ChEBI" id="CHEBI:58516"/>
        <dbReference type="ChEBI" id="CHEBI:58725"/>
        <dbReference type="EC" id="5.4.2.10"/>
    </reaction>
</comment>
<comment type="cofactor">
    <cofactor evidence="1">
        <name>Mg(2+)</name>
        <dbReference type="ChEBI" id="CHEBI:18420"/>
    </cofactor>
    <text evidence="1">Binds 1 Mg(2+) ion per subunit.</text>
</comment>
<comment type="PTM">
    <text evidence="1">Activated by phosphorylation.</text>
</comment>
<comment type="similarity">
    <text evidence="1">Belongs to the phosphohexose mutase family.</text>
</comment>
<protein>
    <recommendedName>
        <fullName evidence="1">Phosphoglucosamine mutase</fullName>
        <ecNumber evidence="1">5.4.2.10</ecNumber>
    </recommendedName>
</protein>
<proteinExistence type="inferred from homology"/>
<evidence type="ECO:0000255" key="1">
    <source>
        <dbReference type="HAMAP-Rule" id="MF_01554"/>
    </source>
</evidence>
<dbReference type="EC" id="5.4.2.10" evidence="1"/>
<dbReference type="EMBL" id="CP000463">
    <property type="protein sequence ID" value="ABJ08093.1"/>
    <property type="molecule type" value="Genomic_DNA"/>
</dbReference>
<dbReference type="SMR" id="Q07IZ1"/>
<dbReference type="STRING" id="316055.RPE_4168"/>
<dbReference type="KEGG" id="rpe:RPE_4168"/>
<dbReference type="eggNOG" id="COG1109">
    <property type="taxonomic scope" value="Bacteria"/>
</dbReference>
<dbReference type="HOGENOM" id="CLU_016950_7_0_5"/>
<dbReference type="OrthoDB" id="9803322at2"/>
<dbReference type="GO" id="GO:0005829">
    <property type="term" value="C:cytosol"/>
    <property type="evidence" value="ECO:0007669"/>
    <property type="project" value="TreeGrafter"/>
</dbReference>
<dbReference type="GO" id="GO:0000287">
    <property type="term" value="F:magnesium ion binding"/>
    <property type="evidence" value="ECO:0007669"/>
    <property type="project" value="UniProtKB-UniRule"/>
</dbReference>
<dbReference type="GO" id="GO:0008966">
    <property type="term" value="F:phosphoglucosamine mutase activity"/>
    <property type="evidence" value="ECO:0007669"/>
    <property type="project" value="UniProtKB-UniRule"/>
</dbReference>
<dbReference type="GO" id="GO:0004615">
    <property type="term" value="F:phosphomannomutase activity"/>
    <property type="evidence" value="ECO:0007669"/>
    <property type="project" value="TreeGrafter"/>
</dbReference>
<dbReference type="GO" id="GO:0005975">
    <property type="term" value="P:carbohydrate metabolic process"/>
    <property type="evidence" value="ECO:0007669"/>
    <property type="project" value="InterPro"/>
</dbReference>
<dbReference type="GO" id="GO:0009252">
    <property type="term" value="P:peptidoglycan biosynthetic process"/>
    <property type="evidence" value="ECO:0007669"/>
    <property type="project" value="TreeGrafter"/>
</dbReference>
<dbReference type="GO" id="GO:0006048">
    <property type="term" value="P:UDP-N-acetylglucosamine biosynthetic process"/>
    <property type="evidence" value="ECO:0007669"/>
    <property type="project" value="TreeGrafter"/>
</dbReference>
<dbReference type="CDD" id="cd05802">
    <property type="entry name" value="GlmM"/>
    <property type="match status" value="1"/>
</dbReference>
<dbReference type="FunFam" id="3.30.310.50:FF:000001">
    <property type="entry name" value="Phosphoglucosamine mutase"/>
    <property type="match status" value="1"/>
</dbReference>
<dbReference type="FunFam" id="3.40.120.10:FF:000001">
    <property type="entry name" value="Phosphoglucosamine mutase"/>
    <property type="match status" value="1"/>
</dbReference>
<dbReference type="FunFam" id="3.40.120.10:FF:000003">
    <property type="entry name" value="Phosphoglucosamine mutase"/>
    <property type="match status" value="1"/>
</dbReference>
<dbReference type="Gene3D" id="3.40.120.10">
    <property type="entry name" value="Alpha-D-Glucose-1,6-Bisphosphate, subunit A, domain 3"/>
    <property type="match status" value="3"/>
</dbReference>
<dbReference type="Gene3D" id="3.30.310.50">
    <property type="entry name" value="Alpha-D-phosphohexomutase, C-terminal domain"/>
    <property type="match status" value="1"/>
</dbReference>
<dbReference type="HAMAP" id="MF_01554_B">
    <property type="entry name" value="GlmM_B"/>
    <property type="match status" value="1"/>
</dbReference>
<dbReference type="InterPro" id="IPR005844">
    <property type="entry name" value="A-D-PHexomutase_a/b/a-I"/>
</dbReference>
<dbReference type="InterPro" id="IPR016055">
    <property type="entry name" value="A-D-PHexomutase_a/b/a-I/II/III"/>
</dbReference>
<dbReference type="InterPro" id="IPR005845">
    <property type="entry name" value="A-D-PHexomutase_a/b/a-II"/>
</dbReference>
<dbReference type="InterPro" id="IPR005846">
    <property type="entry name" value="A-D-PHexomutase_a/b/a-III"/>
</dbReference>
<dbReference type="InterPro" id="IPR005843">
    <property type="entry name" value="A-D-PHexomutase_C"/>
</dbReference>
<dbReference type="InterPro" id="IPR036900">
    <property type="entry name" value="A-D-PHexomutase_C_sf"/>
</dbReference>
<dbReference type="InterPro" id="IPR005841">
    <property type="entry name" value="Alpha-D-phosphohexomutase_SF"/>
</dbReference>
<dbReference type="InterPro" id="IPR006352">
    <property type="entry name" value="GlmM_bact"/>
</dbReference>
<dbReference type="InterPro" id="IPR050060">
    <property type="entry name" value="Phosphoglucosamine_mutase"/>
</dbReference>
<dbReference type="NCBIfam" id="TIGR01455">
    <property type="entry name" value="glmM"/>
    <property type="match status" value="1"/>
</dbReference>
<dbReference type="NCBIfam" id="NF008139">
    <property type="entry name" value="PRK10887.1"/>
    <property type="match status" value="1"/>
</dbReference>
<dbReference type="PANTHER" id="PTHR42946:SF1">
    <property type="entry name" value="PHOSPHOGLUCOMUTASE (ALPHA-D-GLUCOSE-1,6-BISPHOSPHATE-DEPENDENT)"/>
    <property type="match status" value="1"/>
</dbReference>
<dbReference type="PANTHER" id="PTHR42946">
    <property type="entry name" value="PHOSPHOHEXOSE MUTASE"/>
    <property type="match status" value="1"/>
</dbReference>
<dbReference type="Pfam" id="PF02878">
    <property type="entry name" value="PGM_PMM_I"/>
    <property type="match status" value="1"/>
</dbReference>
<dbReference type="Pfam" id="PF02879">
    <property type="entry name" value="PGM_PMM_II"/>
    <property type="match status" value="1"/>
</dbReference>
<dbReference type="Pfam" id="PF02880">
    <property type="entry name" value="PGM_PMM_III"/>
    <property type="match status" value="1"/>
</dbReference>
<dbReference type="Pfam" id="PF00408">
    <property type="entry name" value="PGM_PMM_IV"/>
    <property type="match status" value="1"/>
</dbReference>
<dbReference type="PRINTS" id="PR00509">
    <property type="entry name" value="PGMPMM"/>
</dbReference>
<dbReference type="SUPFAM" id="SSF55957">
    <property type="entry name" value="Phosphoglucomutase, C-terminal domain"/>
    <property type="match status" value="1"/>
</dbReference>
<dbReference type="SUPFAM" id="SSF53738">
    <property type="entry name" value="Phosphoglucomutase, first 3 domains"/>
    <property type="match status" value="3"/>
</dbReference>
<accession>Q07IZ1</accession>
<organism>
    <name type="scientific">Rhodopseudomonas palustris (strain BisA53)</name>
    <dbReference type="NCBI Taxonomy" id="316055"/>
    <lineage>
        <taxon>Bacteria</taxon>
        <taxon>Pseudomonadati</taxon>
        <taxon>Pseudomonadota</taxon>
        <taxon>Alphaproteobacteria</taxon>
        <taxon>Hyphomicrobiales</taxon>
        <taxon>Nitrobacteraceae</taxon>
        <taxon>Rhodopseudomonas</taxon>
    </lineage>
</organism>
<reference key="1">
    <citation type="submission" date="2006-09" db="EMBL/GenBank/DDBJ databases">
        <title>Complete sequence of Rhodopseudomonas palustris BisA53.</title>
        <authorList>
            <consortium name="US DOE Joint Genome Institute"/>
            <person name="Copeland A."/>
            <person name="Lucas S."/>
            <person name="Lapidus A."/>
            <person name="Barry K."/>
            <person name="Detter J.C."/>
            <person name="Glavina del Rio T."/>
            <person name="Hammon N."/>
            <person name="Israni S."/>
            <person name="Dalin E."/>
            <person name="Tice H."/>
            <person name="Pitluck S."/>
            <person name="Chain P."/>
            <person name="Malfatti S."/>
            <person name="Shin M."/>
            <person name="Vergez L."/>
            <person name="Schmutz J."/>
            <person name="Larimer F."/>
            <person name="Land M."/>
            <person name="Hauser L."/>
            <person name="Pelletier D.A."/>
            <person name="Kyrpides N."/>
            <person name="Kim E."/>
            <person name="Harwood C.S."/>
            <person name="Oda Y."/>
            <person name="Richardson P."/>
        </authorList>
    </citation>
    <scope>NUCLEOTIDE SEQUENCE [LARGE SCALE GENOMIC DNA]</scope>
    <source>
        <strain>BisA53</strain>
    </source>
</reference>
<gene>
    <name evidence="1" type="primary">glmM</name>
    <name type="ordered locus">RPE_4168</name>
</gene>
<feature type="chain" id="PRO_0000301368" description="Phosphoglucosamine mutase">
    <location>
        <begin position="1"/>
        <end position="450"/>
    </location>
</feature>
<feature type="active site" description="Phosphoserine intermediate" evidence="1">
    <location>
        <position position="101"/>
    </location>
</feature>
<feature type="binding site" description="via phosphate group" evidence="1">
    <location>
        <position position="101"/>
    </location>
    <ligand>
        <name>Mg(2+)</name>
        <dbReference type="ChEBI" id="CHEBI:18420"/>
    </ligand>
</feature>
<feature type="binding site" evidence="1">
    <location>
        <position position="242"/>
    </location>
    <ligand>
        <name>Mg(2+)</name>
        <dbReference type="ChEBI" id="CHEBI:18420"/>
    </ligand>
</feature>
<feature type="binding site" evidence="1">
    <location>
        <position position="244"/>
    </location>
    <ligand>
        <name>Mg(2+)</name>
        <dbReference type="ChEBI" id="CHEBI:18420"/>
    </ligand>
</feature>
<feature type="binding site" evidence="1">
    <location>
        <position position="246"/>
    </location>
    <ligand>
        <name>Mg(2+)</name>
        <dbReference type="ChEBI" id="CHEBI:18420"/>
    </ligand>
</feature>
<feature type="modified residue" description="Phosphoserine" evidence="1">
    <location>
        <position position="101"/>
    </location>
</feature>
<name>GLMM_RHOP5</name>
<sequence length="450" mass="48552">MSRKYFGTDGIRGRANGLITPELAMKVGQAAGLVFQRGEYRHRVVIGKDTRLSGYMIETALVAGFTSVGMDVLLLGPMPTPAVAMLTKSMRADLGVMISASHNLFEDNGIKLFGPLGFKLSDEVERQIEQLLDECLDKRLAASASLGRARRIDGVHDRYIEFAKRTLPRDLSLDGLRVVIDCANGAAYKVVPEALWELGADVISIGVEPDGFNINKECGSTAPEALSRKVREMRADIGIALDGDADRVILVDERGHVVDGDQLLAVIAQSWQEDGRLSKPGIVATVMSNLGLERFLEGHGIEMVRTPVGDRYVLEQMMTGGYNLGGEPSGHIILSDYATTGDGFVAALQVLAVVQKLGRPVSEVCHKFDPLPQILKNVRFRAGKPLDDADVKSAIRDGEQRLNGHGRLLIRPSGTEPVIRVMAEGDDRDVVEEVVDSICSALGEAAAAAA</sequence>